<dbReference type="EC" id="1.-.-.-" evidence="9"/>
<dbReference type="EMBL" id="LC127182">
    <property type="protein sequence ID" value="BAV69307.1"/>
    <property type="molecule type" value="Genomic_DNA"/>
</dbReference>
<dbReference type="SMR" id="A0A1E1FFL6"/>
<dbReference type="GlyCosmos" id="A0A1E1FFL6">
    <property type="glycosylation" value="2 sites, No reported glycans"/>
</dbReference>
<dbReference type="UniPathway" id="UPA00213"/>
<dbReference type="GO" id="GO:0016020">
    <property type="term" value="C:membrane"/>
    <property type="evidence" value="ECO:0007669"/>
    <property type="project" value="UniProtKB-SubCell"/>
</dbReference>
<dbReference type="GO" id="GO:0071949">
    <property type="term" value="F:FAD binding"/>
    <property type="evidence" value="ECO:0007669"/>
    <property type="project" value="InterPro"/>
</dbReference>
<dbReference type="GO" id="GO:0004497">
    <property type="term" value="F:monooxygenase activity"/>
    <property type="evidence" value="ECO:0007669"/>
    <property type="project" value="UniProtKB-KW"/>
</dbReference>
<dbReference type="GO" id="GO:0016114">
    <property type="term" value="P:terpenoid biosynthetic process"/>
    <property type="evidence" value="ECO:0007669"/>
    <property type="project" value="UniProtKB-UniPathway"/>
</dbReference>
<dbReference type="Gene3D" id="3.50.50.60">
    <property type="entry name" value="FAD/NAD(P)-binding domain"/>
    <property type="match status" value="1"/>
</dbReference>
<dbReference type="InterPro" id="IPR002938">
    <property type="entry name" value="FAD-bd"/>
</dbReference>
<dbReference type="InterPro" id="IPR036188">
    <property type="entry name" value="FAD/NAD-bd_sf"/>
</dbReference>
<dbReference type="InterPro" id="IPR050562">
    <property type="entry name" value="FAD_mOase_fung"/>
</dbReference>
<dbReference type="PANTHER" id="PTHR47356:SF2">
    <property type="entry name" value="FAD-BINDING DOMAIN-CONTAINING PROTEIN-RELATED"/>
    <property type="match status" value="1"/>
</dbReference>
<dbReference type="PANTHER" id="PTHR47356">
    <property type="entry name" value="FAD-DEPENDENT MONOOXYGENASE ASQG-RELATED"/>
    <property type="match status" value="1"/>
</dbReference>
<dbReference type="Pfam" id="PF01494">
    <property type="entry name" value="FAD_binding_3"/>
    <property type="match status" value="2"/>
</dbReference>
<dbReference type="PRINTS" id="PR00420">
    <property type="entry name" value="RNGMNOXGNASE"/>
</dbReference>
<dbReference type="SUPFAM" id="SSF51905">
    <property type="entry name" value="FAD/NAD(P)-binding domain"/>
    <property type="match status" value="1"/>
</dbReference>
<sequence length="476" mass="53220">MSQATVEEKSKLRVIIVGGSVAGLTLAHCLAKANIDHIVLEKRAEISPQEGAFIGIWPNGARILDQLGLYDDFESLMPPVHRMNVRFPDGFTFSSFLPRTIQERFGYPIISIDRQKVLETLYERYPHKSNVLVNKKVMNVRLLGKGVSVVTEDGSAYNGDIVVGADGIHSRIRSEMWRLADENHPGLITSEDKQAFTVEYACVFGISEQLPSLRAGEHINSYSNGLCVITFHGEKGRIFWFLLVKLPKKTTYPNTPRFSAGDAASVCNNFATFRVSEDVCVSDLWMHKLCASMTALEEGILERWHYDRIVLLGDSVHKMTPNIGQGANTALEDASVLASLLNNLSKLSTEDGTSAYAMTKLLDEFQSTRYERAKNTHDKSRFGARLHTRDDMIKTLIGRYVFPYAGPRVLERSVKSLATAHSVEYLPFSKRLGPAWGEYSSRTKSTLGSTPIQMLTLLLPCLFYFMYSKLNLSLSS</sequence>
<reference key="1">
    <citation type="journal article" date="2016" name="J. Am. Chem. Soc.">
        <title>Discovery of key dioxygenases that diverged the paraherquonin and acetoxydehydroaustin pathways in Penicillium brasilianum.</title>
        <authorList>
            <person name="Matsuda Y."/>
            <person name="Iwabuchi T."/>
            <person name="Fujimoto T."/>
            <person name="Awakawa T."/>
            <person name="Nakashima Y."/>
            <person name="Mori T."/>
            <person name="Zhang H."/>
            <person name="Hayashi F."/>
            <person name="Abe I."/>
        </authorList>
    </citation>
    <scope>NUCLEOTIDE SEQUENCE [GENOMIC DNA]</scope>
    <scope>FUNCTION</scope>
    <scope>PATHWAY</scope>
    <source>
        <strain>ATCC 22354 / NBRC 6234 / CBS 338.59 / FRR 3454 / IMI 68220</strain>
    </source>
</reference>
<reference key="2">
    <citation type="journal article" date="2017" name="Nat. Chem. Biol.">
        <title>Molecular basis for the unusual ring reconstruction in fungal meroterpenoid biogenesis.</title>
        <authorList>
            <person name="Mori T."/>
            <person name="Iwabuchi T."/>
            <person name="Hoshino S."/>
            <person name="Wang H."/>
            <person name="Matsuda Y."/>
            <person name="Abe I."/>
        </authorList>
    </citation>
    <scope>FUNCTION</scope>
</reference>
<reference key="3">
    <citation type="journal article" date="2018" name="Nat. Commun.">
        <title>Structure function and engineering of multifunctional non-heme iron dependent oxygenases in fungal meroterpenoid biosynthesis.</title>
        <authorList>
            <person name="Nakashima Y."/>
            <person name="Mori T."/>
            <person name="Nakamura H."/>
            <person name="Awakawa T."/>
            <person name="Hoshino S."/>
            <person name="Senda M."/>
            <person name="Senda T."/>
            <person name="Abe I."/>
        </authorList>
    </citation>
    <scope>FUNCTION</scope>
</reference>
<keyword id="KW-0274">FAD</keyword>
<keyword id="KW-0285">Flavoprotein</keyword>
<keyword id="KW-0325">Glycoprotein</keyword>
<keyword id="KW-0472">Membrane</keyword>
<keyword id="KW-0503">Monooxygenase</keyword>
<keyword id="KW-0560">Oxidoreductase</keyword>
<keyword id="KW-0812">Transmembrane</keyword>
<keyword id="KW-1133">Transmembrane helix</keyword>
<accession>A0A1E1FFL6</accession>
<gene>
    <name evidence="7" type="primary">prhF</name>
</gene>
<name>PRHF_PENBI</name>
<comment type="function">
    <text evidence="2 5 6 9 10 11">FAD-dependent monooxygenase; part of the gene cluster that mediates the biosynthesis of paraherquonin, a meroterpenoid with a unique, highly congested hexacyclic molecular architecture (PubMed:27602587). The first step of the pathway is the synthesis of 3,5-dimethylorsellinic acid (DMOA) by the polyketide synthase prhL (By similarity). Synthesis of DMOA is followed by farnesylation by the prenyltransferase prhE, methylesterification by the methyl-transferase prhM, epoxidation of the prenyl chain by the flavin-dependent monooxygenase prhF, and cyclization of the farnesyl moiety by the terpene cyclase prhH, to yield the tetracyclic intermediate, protoaustinoid A (By similarity). The short chain dehydrogenase prhI then oxidizes the C-3 alcohol group of the terpene cyclase product to transform protoaustinoid A into protoaustinoid B (PubMed:27602587). The FAD-binding monooxygenase prhJ catalyzes the oxidation of protoaustinoid B into preaustinoid A which is further oxidized into preaustinoid A1 by FAD-binding monooxygenase phrK (PubMed:27602587). Finally, prhA leads to berkeleydione via the berkeleyone B intermediate (PubMed:27602587, PubMed:29317628). PrhA is a multifunctional dioxygenase that first desaturates at C5-C6 to form berkeleyone B, followed by rearrangement of the A/B-ring to form the cycloheptadiene moiety in berkeleydione (PubMed:27602587, PubMed:29317628). Berkeleydione serves as the key intermediate for the biosynthesis of paraherquonin as well as many other meroterpenoids (Probable). The cytochrome P450 monooxygenases prhB, prhD, and prhN, as well as the isomerase prhC, are probably involved in the late stage of paraherquonin biosynthesis, after the production of berkeleydione (Probable). Especially prhC might be a multifunctional enzyme that catalyzes the D-ring expansion via intramolecular methoxy rearrangement, as well as the hydrolysis of the expanded D-ring (Probable).</text>
</comment>
<comment type="cofactor">
    <cofactor evidence="8">
        <name>FAD</name>
        <dbReference type="ChEBI" id="CHEBI:57692"/>
    </cofactor>
</comment>
<comment type="pathway">
    <text evidence="9">Secondary metabolite biosynthesis; terpenoid biosynthesis.</text>
</comment>
<comment type="subcellular location">
    <subcellularLocation>
        <location evidence="3">Membrane</location>
        <topology evidence="3">Single-pass membrane protein</topology>
    </subcellularLocation>
</comment>
<comment type="similarity">
    <text evidence="8">Belongs to the paxM FAD-dependent monooxygenase family.</text>
</comment>
<feature type="chain" id="PRO_0000449171" description="FAD-dependent monooxygenase prhF">
    <location>
        <begin position="1"/>
        <end position="476"/>
    </location>
</feature>
<feature type="transmembrane region" description="Helical" evidence="3">
    <location>
        <begin position="447"/>
        <end position="467"/>
    </location>
</feature>
<feature type="active site" evidence="1">
    <location>
        <position position="222"/>
    </location>
</feature>
<feature type="binding site" evidence="1">
    <location>
        <position position="41"/>
    </location>
    <ligand>
        <name>FAD</name>
        <dbReference type="ChEBI" id="CHEBI:57692"/>
    </ligand>
</feature>
<feature type="binding site" evidence="1">
    <location>
        <position position="55"/>
    </location>
    <ligand>
        <name>FAD</name>
        <dbReference type="ChEBI" id="CHEBI:57692"/>
    </ligand>
</feature>
<feature type="binding site" evidence="1">
    <location>
        <position position="114"/>
    </location>
    <ligand>
        <name>FAD</name>
        <dbReference type="ChEBI" id="CHEBI:57692"/>
    </ligand>
</feature>
<feature type="binding site" evidence="1">
    <location>
        <position position="314"/>
    </location>
    <ligand>
        <name>FAD</name>
        <dbReference type="ChEBI" id="CHEBI:57692"/>
    </ligand>
</feature>
<feature type="binding site" evidence="1">
    <location>
        <position position="327"/>
    </location>
    <ligand>
        <name>FAD</name>
        <dbReference type="ChEBI" id="CHEBI:57692"/>
    </ligand>
</feature>
<feature type="glycosylation site" description="N-linked (GlcNAc...) asparagine" evidence="4">
    <location>
        <position position="343"/>
    </location>
</feature>
<feature type="glycosylation site" description="N-linked (GlcNAc...) asparagine" evidence="4">
    <location>
        <position position="471"/>
    </location>
</feature>
<organism>
    <name type="scientific">Penicillium brasilianum</name>
    <dbReference type="NCBI Taxonomy" id="104259"/>
    <lineage>
        <taxon>Eukaryota</taxon>
        <taxon>Fungi</taxon>
        <taxon>Dikarya</taxon>
        <taxon>Ascomycota</taxon>
        <taxon>Pezizomycotina</taxon>
        <taxon>Eurotiomycetes</taxon>
        <taxon>Eurotiomycetidae</taxon>
        <taxon>Eurotiales</taxon>
        <taxon>Aspergillaceae</taxon>
        <taxon>Penicillium</taxon>
    </lineage>
</organism>
<proteinExistence type="inferred from homology"/>
<evidence type="ECO:0000250" key="1">
    <source>
        <dbReference type="UniProtKB" id="B8M9J8"/>
    </source>
</evidence>
<evidence type="ECO:0000250" key="2">
    <source>
        <dbReference type="UniProtKB" id="Q5ATJ7"/>
    </source>
</evidence>
<evidence type="ECO:0000255" key="3"/>
<evidence type="ECO:0000255" key="4">
    <source>
        <dbReference type="PROSITE-ProRule" id="PRU00498"/>
    </source>
</evidence>
<evidence type="ECO:0000269" key="5">
    <source>
    </source>
</evidence>
<evidence type="ECO:0000269" key="6">
    <source>
    </source>
</evidence>
<evidence type="ECO:0000303" key="7">
    <source>
    </source>
</evidence>
<evidence type="ECO:0000305" key="8"/>
<evidence type="ECO:0000305" key="9">
    <source>
    </source>
</evidence>
<evidence type="ECO:0000305" key="10">
    <source>
    </source>
</evidence>
<evidence type="ECO:0000305" key="11">
    <source>
    </source>
</evidence>
<protein>
    <recommendedName>
        <fullName evidence="7">FAD-dependent monooxygenase prhF</fullName>
        <ecNumber evidence="9">1.-.-.-</ecNumber>
    </recommendedName>
    <alternativeName>
        <fullName evidence="7">Paraherquonin biosynthesis cluster protein F</fullName>
    </alternativeName>
</protein>